<gene>
    <name evidence="1" type="primary">gltX2</name>
    <name type="ordered locus">JJD26997_0994</name>
</gene>
<organism>
    <name type="scientific">Campylobacter jejuni subsp. doylei (strain ATCC BAA-1458 / RM4099 / 269.97)</name>
    <dbReference type="NCBI Taxonomy" id="360109"/>
    <lineage>
        <taxon>Bacteria</taxon>
        <taxon>Pseudomonadati</taxon>
        <taxon>Campylobacterota</taxon>
        <taxon>Epsilonproteobacteria</taxon>
        <taxon>Campylobacterales</taxon>
        <taxon>Campylobacteraceae</taxon>
        <taxon>Campylobacter</taxon>
    </lineage>
</organism>
<proteinExistence type="inferred from homology"/>
<dbReference type="EC" id="6.1.1.17" evidence="1"/>
<dbReference type="EMBL" id="CP000768">
    <property type="protein sequence ID" value="ABS44636.1"/>
    <property type="molecule type" value="Genomic_DNA"/>
</dbReference>
<dbReference type="SMR" id="A7H3M3"/>
<dbReference type="KEGG" id="cjd:JJD26997_0994"/>
<dbReference type="HOGENOM" id="CLU_015768_6_0_7"/>
<dbReference type="Proteomes" id="UP000002302">
    <property type="component" value="Chromosome"/>
</dbReference>
<dbReference type="GO" id="GO:0005829">
    <property type="term" value="C:cytosol"/>
    <property type="evidence" value="ECO:0007669"/>
    <property type="project" value="TreeGrafter"/>
</dbReference>
<dbReference type="GO" id="GO:0005524">
    <property type="term" value="F:ATP binding"/>
    <property type="evidence" value="ECO:0007669"/>
    <property type="project" value="UniProtKB-UniRule"/>
</dbReference>
<dbReference type="GO" id="GO:0004818">
    <property type="term" value="F:glutamate-tRNA ligase activity"/>
    <property type="evidence" value="ECO:0007669"/>
    <property type="project" value="UniProtKB-UniRule"/>
</dbReference>
<dbReference type="GO" id="GO:0000049">
    <property type="term" value="F:tRNA binding"/>
    <property type="evidence" value="ECO:0007669"/>
    <property type="project" value="InterPro"/>
</dbReference>
<dbReference type="GO" id="GO:0006424">
    <property type="term" value="P:glutamyl-tRNA aminoacylation"/>
    <property type="evidence" value="ECO:0007669"/>
    <property type="project" value="UniProtKB-UniRule"/>
</dbReference>
<dbReference type="Gene3D" id="1.10.10.350">
    <property type="match status" value="1"/>
</dbReference>
<dbReference type="Gene3D" id="3.40.50.620">
    <property type="entry name" value="HUPs"/>
    <property type="match status" value="1"/>
</dbReference>
<dbReference type="HAMAP" id="MF_00022">
    <property type="entry name" value="Glu_tRNA_synth_type1"/>
    <property type="match status" value="1"/>
</dbReference>
<dbReference type="InterPro" id="IPR045462">
    <property type="entry name" value="aa-tRNA-synth_I_cd-bd"/>
</dbReference>
<dbReference type="InterPro" id="IPR020751">
    <property type="entry name" value="aa-tRNA-synth_I_codon-bd_sub2"/>
</dbReference>
<dbReference type="InterPro" id="IPR001412">
    <property type="entry name" value="aa-tRNA-synth_I_CS"/>
</dbReference>
<dbReference type="InterPro" id="IPR008925">
    <property type="entry name" value="aa_tRNA-synth_I_cd-bd_sf"/>
</dbReference>
<dbReference type="InterPro" id="IPR004527">
    <property type="entry name" value="Glu-tRNA-ligase_bac/mito"/>
</dbReference>
<dbReference type="InterPro" id="IPR000924">
    <property type="entry name" value="Glu/Gln-tRNA-synth"/>
</dbReference>
<dbReference type="InterPro" id="IPR020058">
    <property type="entry name" value="Glu/Gln-tRNA-synth_Ib_cat-dom"/>
</dbReference>
<dbReference type="InterPro" id="IPR049940">
    <property type="entry name" value="GluQ/Sye"/>
</dbReference>
<dbReference type="InterPro" id="IPR014729">
    <property type="entry name" value="Rossmann-like_a/b/a_fold"/>
</dbReference>
<dbReference type="NCBIfam" id="TIGR00464">
    <property type="entry name" value="gltX_bact"/>
    <property type="match status" value="1"/>
</dbReference>
<dbReference type="PANTHER" id="PTHR43311">
    <property type="entry name" value="GLUTAMATE--TRNA LIGASE"/>
    <property type="match status" value="1"/>
</dbReference>
<dbReference type="PANTHER" id="PTHR43311:SF2">
    <property type="entry name" value="GLUTAMATE--TRNA LIGASE, MITOCHONDRIAL-RELATED"/>
    <property type="match status" value="1"/>
</dbReference>
<dbReference type="Pfam" id="PF19269">
    <property type="entry name" value="Anticodon_2"/>
    <property type="match status" value="1"/>
</dbReference>
<dbReference type="Pfam" id="PF00749">
    <property type="entry name" value="tRNA-synt_1c"/>
    <property type="match status" value="1"/>
</dbReference>
<dbReference type="PRINTS" id="PR00987">
    <property type="entry name" value="TRNASYNTHGLU"/>
</dbReference>
<dbReference type="SUPFAM" id="SSF48163">
    <property type="entry name" value="An anticodon-binding domain of class I aminoacyl-tRNA synthetases"/>
    <property type="match status" value="1"/>
</dbReference>
<dbReference type="SUPFAM" id="SSF52374">
    <property type="entry name" value="Nucleotidylyl transferase"/>
    <property type="match status" value="1"/>
</dbReference>
<dbReference type="PROSITE" id="PS00178">
    <property type="entry name" value="AA_TRNA_LIGASE_I"/>
    <property type="match status" value="1"/>
</dbReference>
<feature type="chain" id="PRO_0000367639" description="Glutamate--tRNA ligase 2">
    <location>
        <begin position="1"/>
        <end position="431"/>
    </location>
</feature>
<feature type="short sequence motif" description="'HIGH' region" evidence="1">
    <location>
        <begin position="6"/>
        <end position="16"/>
    </location>
</feature>
<feature type="short sequence motif" description="'KMSKS' region" evidence="1">
    <location>
        <begin position="235"/>
        <end position="239"/>
    </location>
</feature>
<feature type="binding site" evidence="1">
    <location>
        <position position="238"/>
    </location>
    <ligand>
        <name>ATP</name>
        <dbReference type="ChEBI" id="CHEBI:30616"/>
    </ligand>
</feature>
<protein>
    <recommendedName>
        <fullName evidence="1">Glutamate--tRNA ligase 2</fullName>
        <ecNumber evidence="1">6.1.1.17</ecNumber>
    </recommendedName>
    <alternativeName>
        <fullName evidence="1">Glutamyl-tRNA synthetase 2</fullName>
        <shortName evidence="1">GluRS 2</shortName>
    </alternativeName>
</protein>
<accession>A7H3M3</accession>
<evidence type="ECO:0000255" key="1">
    <source>
        <dbReference type="HAMAP-Rule" id="MF_00022"/>
    </source>
</evidence>
<sequence>MYRFAPSPTGDMHIGNLRAAIFNYICARQKNMDFILRIEDTDKSRNIKGKEEEIKEILNLFGISWQHYYIQSENLKFHRQMALKLVSEKKAFACFCTEEELEAKKELAKKQGKAYRYDGTCEKLADIDVLECEKSFVIRLKKPTHTMKFTDFIKGELSFEPENIDSFVIMRTDKTPTYNFACAVDDMLENVTCIIRGEDHVSNTPKQEHIRASLGYDKAMTYAHLPIILNEEGVKMSKREAHSSVKWLLESGILPSAITNYLIMLGNKTPYEIFTLEEAIKWFDISKVSKAPARFDLKKLLQINREHIKMIKDDELNKILDLNKDLAQLAKFYTQEASTIKELKEKMRAIFNTKDFGEFETECKILKELLKDIELFENYEDFKNKLLNKSSLKGKKFFMPLRIILTGNIHGPELSDLYPYIKNFIHELARI</sequence>
<reference key="1">
    <citation type="submission" date="2007-07" db="EMBL/GenBank/DDBJ databases">
        <title>Complete genome sequence of Campylobacter jejuni subsp doylei 269.97 isolated from human blood.</title>
        <authorList>
            <person name="Fouts D.E."/>
            <person name="Mongodin E.F."/>
            <person name="Puiu D."/>
            <person name="Sebastian Y."/>
            <person name="Miller W.G."/>
            <person name="Mandrell R.E."/>
            <person name="Lastovica A.J."/>
            <person name="Nelson K.E."/>
        </authorList>
    </citation>
    <scope>NUCLEOTIDE SEQUENCE [LARGE SCALE GENOMIC DNA]</scope>
    <source>
        <strain>ATCC BAA-1458 / RM4099 / 269.97</strain>
    </source>
</reference>
<name>SYE2_CAMJD</name>
<comment type="function">
    <text evidence="1">Catalyzes the attachment of glutamate to tRNA(Glu) in a two-step reaction: glutamate is first activated by ATP to form Glu-AMP and then transferred to the acceptor end of tRNA(Glu).</text>
</comment>
<comment type="catalytic activity">
    <reaction evidence="1">
        <text>tRNA(Glu) + L-glutamate + ATP = L-glutamyl-tRNA(Glu) + AMP + diphosphate</text>
        <dbReference type="Rhea" id="RHEA:23540"/>
        <dbReference type="Rhea" id="RHEA-COMP:9663"/>
        <dbReference type="Rhea" id="RHEA-COMP:9680"/>
        <dbReference type="ChEBI" id="CHEBI:29985"/>
        <dbReference type="ChEBI" id="CHEBI:30616"/>
        <dbReference type="ChEBI" id="CHEBI:33019"/>
        <dbReference type="ChEBI" id="CHEBI:78442"/>
        <dbReference type="ChEBI" id="CHEBI:78520"/>
        <dbReference type="ChEBI" id="CHEBI:456215"/>
        <dbReference type="EC" id="6.1.1.17"/>
    </reaction>
</comment>
<comment type="subunit">
    <text evidence="1">Monomer.</text>
</comment>
<comment type="subcellular location">
    <subcellularLocation>
        <location evidence="1">Cytoplasm</location>
    </subcellularLocation>
</comment>
<comment type="similarity">
    <text evidence="1">Belongs to the class-I aminoacyl-tRNA synthetase family. Glutamate--tRNA ligase type 1 subfamily.</text>
</comment>
<keyword id="KW-0030">Aminoacyl-tRNA synthetase</keyword>
<keyword id="KW-0067">ATP-binding</keyword>
<keyword id="KW-0963">Cytoplasm</keyword>
<keyword id="KW-0436">Ligase</keyword>
<keyword id="KW-0547">Nucleotide-binding</keyword>
<keyword id="KW-0648">Protein biosynthesis</keyword>